<proteinExistence type="inferred from homology"/>
<comment type="function">
    <text evidence="1">Redox regulated molecular chaperone. Protects both thermally unfolding and oxidatively damaged proteins from irreversible aggregation. Plays an important role in the bacterial defense system toward oxidative stress.</text>
</comment>
<comment type="subcellular location">
    <subcellularLocation>
        <location evidence="1">Cytoplasm</location>
    </subcellularLocation>
</comment>
<comment type="PTM">
    <text evidence="1">Under oxidizing conditions two disulfide bonds are formed involving the reactive cysteines. Under reducing conditions zinc is bound to the reactive cysteines and the protein is inactive.</text>
</comment>
<comment type="similarity">
    <text evidence="1">Belongs to the HSP33 family.</text>
</comment>
<accession>Q88Z30</accession>
<accession>F9UL21</accession>
<reference key="1">
    <citation type="journal article" date="2003" name="Proc. Natl. Acad. Sci. U.S.A.">
        <title>Complete genome sequence of Lactobacillus plantarum WCFS1.</title>
        <authorList>
            <person name="Kleerebezem M."/>
            <person name="Boekhorst J."/>
            <person name="van Kranenburg R."/>
            <person name="Molenaar D."/>
            <person name="Kuipers O.P."/>
            <person name="Leer R."/>
            <person name="Tarchini R."/>
            <person name="Peters S.A."/>
            <person name="Sandbrink H.M."/>
            <person name="Fiers M.W.E.J."/>
            <person name="Stiekema W."/>
            <person name="Klein Lankhorst R.M."/>
            <person name="Bron P.A."/>
            <person name="Hoffer S.M."/>
            <person name="Nierop Groot M.N."/>
            <person name="Kerkhoven R."/>
            <person name="De Vries M."/>
            <person name="Ursing B."/>
            <person name="De Vos W.M."/>
            <person name="Siezen R.J."/>
        </authorList>
    </citation>
    <scope>NUCLEOTIDE SEQUENCE [LARGE SCALE GENOMIC DNA]</scope>
    <source>
        <strain>ATCC BAA-793 / NCIMB 8826 / WCFS1</strain>
    </source>
</reference>
<reference key="2">
    <citation type="journal article" date="2012" name="J. Bacteriol.">
        <title>Complete resequencing and reannotation of the Lactobacillus plantarum WCFS1 genome.</title>
        <authorList>
            <person name="Siezen R.J."/>
            <person name="Francke C."/>
            <person name="Renckens B."/>
            <person name="Boekhorst J."/>
            <person name="Wels M."/>
            <person name="Kleerebezem M."/>
            <person name="van Hijum S.A."/>
        </authorList>
    </citation>
    <scope>NUCLEOTIDE SEQUENCE [LARGE SCALE GENOMIC DNA]</scope>
    <scope>GENOME REANNOTATION</scope>
    <source>
        <strain>ATCC BAA-793 / NCIMB 8826 / WCFS1</strain>
    </source>
</reference>
<organism>
    <name type="scientific">Lactiplantibacillus plantarum (strain ATCC BAA-793 / NCIMB 8826 / WCFS1)</name>
    <name type="common">Lactobacillus plantarum</name>
    <dbReference type="NCBI Taxonomy" id="220668"/>
    <lineage>
        <taxon>Bacteria</taxon>
        <taxon>Bacillati</taxon>
        <taxon>Bacillota</taxon>
        <taxon>Bacilli</taxon>
        <taxon>Lactobacillales</taxon>
        <taxon>Lactobacillaceae</taxon>
        <taxon>Lactiplantibacillus</taxon>
    </lineage>
</organism>
<feature type="chain" id="PRO_0000192182" description="33 kDa chaperonin">
    <location>
        <begin position="1"/>
        <end position="295"/>
    </location>
</feature>
<feature type="disulfide bond" description="Redox-active" evidence="1">
    <location>
        <begin position="237"/>
        <end position="239"/>
    </location>
</feature>
<feature type="disulfide bond" description="Redox-active" evidence="1">
    <location>
        <begin position="270"/>
        <end position="273"/>
    </location>
</feature>
<evidence type="ECO:0000255" key="1">
    <source>
        <dbReference type="HAMAP-Rule" id="MF_00117"/>
    </source>
</evidence>
<gene>
    <name evidence="1" type="primary">hslO</name>
    <name type="ordered locus">lp_0548</name>
</gene>
<dbReference type="EMBL" id="AL935263">
    <property type="protein sequence ID" value="CCC78036.1"/>
    <property type="molecule type" value="Genomic_DNA"/>
</dbReference>
<dbReference type="RefSeq" id="WP_003642088.1">
    <property type="nucleotide sequence ID" value="NC_004567.2"/>
</dbReference>
<dbReference type="RefSeq" id="YP_004888550.1">
    <property type="nucleotide sequence ID" value="NC_004567.2"/>
</dbReference>
<dbReference type="SMR" id="Q88Z30"/>
<dbReference type="STRING" id="220668.lp_0548"/>
<dbReference type="EnsemblBacteria" id="CCC78036">
    <property type="protein sequence ID" value="CCC78036"/>
    <property type="gene ID" value="lp_0548"/>
</dbReference>
<dbReference type="GeneID" id="89668192"/>
<dbReference type="KEGG" id="lpl:lp_0548"/>
<dbReference type="PATRIC" id="fig|220668.9.peg.454"/>
<dbReference type="eggNOG" id="COG1281">
    <property type="taxonomic scope" value="Bacteria"/>
</dbReference>
<dbReference type="HOGENOM" id="CLU_054493_1_0_9"/>
<dbReference type="OrthoDB" id="9776534at2"/>
<dbReference type="PhylomeDB" id="Q88Z30"/>
<dbReference type="Proteomes" id="UP000000432">
    <property type="component" value="Chromosome"/>
</dbReference>
<dbReference type="GO" id="GO:0005737">
    <property type="term" value="C:cytoplasm"/>
    <property type="evidence" value="ECO:0007669"/>
    <property type="project" value="UniProtKB-SubCell"/>
</dbReference>
<dbReference type="GO" id="GO:0044183">
    <property type="term" value="F:protein folding chaperone"/>
    <property type="evidence" value="ECO:0007669"/>
    <property type="project" value="TreeGrafter"/>
</dbReference>
<dbReference type="GO" id="GO:0051082">
    <property type="term" value="F:unfolded protein binding"/>
    <property type="evidence" value="ECO:0007669"/>
    <property type="project" value="UniProtKB-UniRule"/>
</dbReference>
<dbReference type="GO" id="GO:0042026">
    <property type="term" value="P:protein refolding"/>
    <property type="evidence" value="ECO:0007669"/>
    <property type="project" value="TreeGrafter"/>
</dbReference>
<dbReference type="CDD" id="cd00498">
    <property type="entry name" value="Hsp33"/>
    <property type="match status" value="1"/>
</dbReference>
<dbReference type="Gene3D" id="3.55.30.10">
    <property type="entry name" value="Hsp33 domain"/>
    <property type="match status" value="1"/>
</dbReference>
<dbReference type="Gene3D" id="3.90.1280.10">
    <property type="entry name" value="HSP33 redox switch-like"/>
    <property type="match status" value="1"/>
</dbReference>
<dbReference type="HAMAP" id="MF_00117">
    <property type="entry name" value="HslO"/>
    <property type="match status" value="1"/>
</dbReference>
<dbReference type="InterPro" id="IPR000397">
    <property type="entry name" value="Heat_shock_Hsp33"/>
</dbReference>
<dbReference type="InterPro" id="IPR016154">
    <property type="entry name" value="Heat_shock_Hsp33_C"/>
</dbReference>
<dbReference type="InterPro" id="IPR016153">
    <property type="entry name" value="Heat_shock_Hsp33_N"/>
</dbReference>
<dbReference type="NCBIfam" id="NF001033">
    <property type="entry name" value="PRK00114.1"/>
    <property type="match status" value="1"/>
</dbReference>
<dbReference type="PANTHER" id="PTHR30111">
    <property type="entry name" value="33 KDA CHAPERONIN"/>
    <property type="match status" value="1"/>
</dbReference>
<dbReference type="PANTHER" id="PTHR30111:SF1">
    <property type="entry name" value="33 KDA CHAPERONIN"/>
    <property type="match status" value="1"/>
</dbReference>
<dbReference type="Pfam" id="PF01430">
    <property type="entry name" value="HSP33"/>
    <property type="match status" value="1"/>
</dbReference>
<dbReference type="PIRSF" id="PIRSF005261">
    <property type="entry name" value="Heat_shock_Hsp33"/>
    <property type="match status" value="1"/>
</dbReference>
<dbReference type="SUPFAM" id="SSF64397">
    <property type="entry name" value="Hsp33 domain"/>
    <property type="match status" value="1"/>
</dbReference>
<dbReference type="SUPFAM" id="SSF118352">
    <property type="entry name" value="HSP33 redox switch-like"/>
    <property type="match status" value="1"/>
</dbReference>
<protein>
    <recommendedName>
        <fullName evidence="1">33 kDa chaperonin</fullName>
    </recommendedName>
    <alternativeName>
        <fullName evidence="1">Heat shock protein 33 homolog</fullName>
        <shortName evidence="1">HSP33</shortName>
    </alternativeName>
</protein>
<name>HSLO_LACPL</name>
<keyword id="KW-0143">Chaperone</keyword>
<keyword id="KW-0963">Cytoplasm</keyword>
<keyword id="KW-1015">Disulfide bond</keyword>
<keyword id="KW-0676">Redox-active center</keyword>
<keyword id="KW-1185">Reference proteome</keyword>
<keyword id="KW-0862">Zinc</keyword>
<sequence length="295" mass="31472">MADYLVKSVAGNEMFRAYAVSATGVVAEAQRRHDTWSAASAALGRSLVGTLLLASSVLKGEEQMTVKINGNGPVGGIVVDGNAKGTVKGYLQHPHVHLPLNDKHKIDVKAAVGTDGFLSVTKDQGVGDPFTGTVALVSGELGEDFTYYLAQSEQIPSAVGLSVFVNDDNSIGVAGGFLVQVLPNATDEAISSLENKLKDMPLVSQLMRDGKSPEDILDLLFDGDVKVLDKMPVKFECDCSKERFAEALMALPKHEVQAMIDEDHGATAVCHFCGDQYQFSERELEAVLSRSKGDA</sequence>